<comment type="function">
    <text evidence="3">Catalyzes the specific phosphorylation of the 3-hydroxyl group of shikimic acid using ATP as a cosubstrate.</text>
</comment>
<comment type="catalytic activity">
    <reaction evidence="3">
        <text>shikimate + ATP = 3-phosphoshikimate + ADP + H(+)</text>
        <dbReference type="Rhea" id="RHEA:13121"/>
        <dbReference type="ChEBI" id="CHEBI:15378"/>
        <dbReference type="ChEBI" id="CHEBI:30616"/>
        <dbReference type="ChEBI" id="CHEBI:36208"/>
        <dbReference type="ChEBI" id="CHEBI:145989"/>
        <dbReference type="ChEBI" id="CHEBI:456216"/>
        <dbReference type="EC" id="2.7.1.71"/>
    </reaction>
</comment>
<comment type="cofactor">
    <cofactor evidence="1">
        <name>Mg(2+)</name>
        <dbReference type="ChEBI" id="CHEBI:18420"/>
    </cofactor>
    <text evidence="1">Binds 1 Mg(2+) ion per subunit.</text>
</comment>
<comment type="pathway">
    <text>Metabolic intermediate biosynthesis; chorismate biosynthesis; chorismate from D-erythrose 4-phosphate and phosphoenolpyruvate: step 5/7.</text>
</comment>
<comment type="subcellular location">
    <subcellularLocation>
        <location evidence="5">Plastid</location>
        <location evidence="5">Chloroplast</location>
    </subcellularLocation>
</comment>
<comment type="tissue specificity">
    <text evidence="3">Expressed in panicles.</text>
</comment>
<comment type="similarity">
    <text evidence="4">Belongs to the shikimate kinase family.</text>
</comment>
<comment type="sequence caution" evidence="4">
    <conflict type="erroneous gene model prediction">
        <sequence resource="EMBL-CDS" id="CAE03634"/>
    </conflict>
</comment>
<protein>
    <recommendedName>
        <fullName>Shikimate kinase 3, chloroplastic</fullName>
        <shortName>OsSK3</shortName>
        <ecNumber>2.7.1.71</ecNumber>
    </recommendedName>
</protein>
<keyword id="KW-0028">Amino-acid biosynthesis</keyword>
<keyword id="KW-0057">Aromatic amino acid biosynthesis</keyword>
<keyword id="KW-0067">ATP-binding</keyword>
<keyword id="KW-0150">Chloroplast</keyword>
<keyword id="KW-0418">Kinase</keyword>
<keyword id="KW-0460">Magnesium</keyword>
<keyword id="KW-0479">Metal-binding</keyword>
<keyword id="KW-0547">Nucleotide-binding</keyword>
<keyword id="KW-0934">Plastid</keyword>
<keyword id="KW-1185">Reference proteome</keyword>
<keyword id="KW-0808">Transferase</keyword>
<keyword id="KW-0809">Transit peptide</keyword>
<dbReference type="EC" id="2.7.1.71"/>
<dbReference type="EMBL" id="AB188836">
    <property type="protein sequence ID" value="BAD83414.1"/>
    <property type="molecule type" value="mRNA"/>
</dbReference>
<dbReference type="EMBL" id="AL606455">
    <property type="protein sequence ID" value="CAE02970.2"/>
    <property type="molecule type" value="Genomic_DNA"/>
</dbReference>
<dbReference type="EMBL" id="AL606649">
    <property type="protein sequence ID" value="CAE03634.1"/>
    <property type="status" value="ALT_SEQ"/>
    <property type="molecule type" value="Genomic_DNA"/>
</dbReference>
<dbReference type="EMBL" id="AP008210">
    <property type="protein sequence ID" value="BAF15951.2"/>
    <property type="molecule type" value="Genomic_DNA"/>
</dbReference>
<dbReference type="EMBL" id="AP014960">
    <property type="status" value="NOT_ANNOTATED_CDS"/>
    <property type="molecule type" value="Genomic_DNA"/>
</dbReference>
<dbReference type="EMBL" id="CM000141">
    <property type="protein sequence ID" value="EEE61782.1"/>
    <property type="molecule type" value="Genomic_DNA"/>
</dbReference>
<dbReference type="RefSeq" id="XP_015636368.1">
    <property type="nucleotide sequence ID" value="XM_015780882.1"/>
</dbReference>
<dbReference type="SMR" id="Q7X7H9"/>
<dbReference type="FunCoup" id="Q7X7H9">
    <property type="interactions" value="242"/>
</dbReference>
<dbReference type="STRING" id="39947.Q7X7H9"/>
<dbReference type="PaxDb" id="39947-Q7X7H9"/>
<dbReference type="EnsemblPlants" id="Os04t0640600-03">
    <property type="protein sequence ID" value="Os04t0640600-03"/>
    <property type="gene ID" value="Os04g0640600"/>
</dbReference>
<dbReference type="Gramene" id="Os04t0640600-03">
    <property type="protein sequence ID" value="Os04t0640600-03"/>
    <property type="gene ID" value="Os04g0640600"/>
</dbReference>
<dbReference type="KEGG" id="dosa:Os04g0640600"/>
<dbReference type="eggNOG" id="ENOG502QTKR">
    <property type="taxonomic scope" value="Eukaryota"/>
</dbReference>
<dbReference type="InParanoid" id="Q7X7H9"/>
<dbReference type="OrthoDB" id="197068at2759"/>
<dbReference type="BRENDA" id="2.7.1.71">
    <property type="organism ID" value="4460"/>
</dbReference>
<dbReference type="PlantReactome" id="R-OSA-1119430">
    <property type="pathway name" value="Chorismate biosynthesis"/>
</dbReference>
<dbReference type="UniPathway" id="UPA00053">
    <property type="reaction ID" value="UER00088"/>
</dbReference>
<dbReference type="Proteomes" id="UP000000763">
    <property type="component" value="Chromosome 4"/>
</dbReference>
<dbReference type="Proteomes" id="UP000007752">
    <property type="component" value="Chromosome 4"/>
</dbReference>
<dbReference type="Proteomes" id="UP000059680">
    <property type="component" value="Chromosome 4"/>
</dbReference>
<dbReference type="GO" id="GO:0009507">
    <property type="term" value="C:chloroplast"/>
    <property type="evidence" value="ECO:0000314"/>
    <property type="project" value="UniProtKB"/>
</dbReference>
<dbReference type="GO" id="GO:0009536">
    <property type="term" value="C:plastid"/>
    <property type="evidence" value="ECO:0000314"/>
    <property type="project" value="Gramene"/>
</dbReference>
<dbReference type="GO" id="GO:0005524">
    <property type="term" value="F:ATP binding"/>
    <property type="evidence" value="ECO:0007669"/>
    <property type="project" value="UniProtKB-KW"/>
</dbReference>
<dbReference type="GO" id="GO:0046872">
    <property type="term" value="F:metal ion binding"/>
    <property type="evidence" value="ECO:0007669"/>
    <property type="project" value="UniProtKB-KW"/>
</dbReference>
<dbReference type="GO" id="GO:0004765">
    <property type="term" value="F:shikimate kinase activity"/>
    <property type="evidence" value="ECO:0000314"/>
    <property type="project" value="Gramene"/>
</dbReference>
<dbReference type="GO" id="GO:0008652">
    <property type="term" value="P:amino acid biosynthetic process"/>
    <property type="evidence" value="ECO:0007669"/>
    <property type="project" value="UniProtKB-KW"/>
</dbReference>
<dbReference type="GO" id="GO:0009073">
    <property type="term" value="P:aromatic amino acid family biosynthetic process"/>
    <property type="evidence" value="ECO:0000314"/>
    <property type="project" value="Gramene"/>
</dbReference>
<dbReference type="GO" id="GO:0009423">
    <property type="term" value="P:chorismate biosynthetic process"/>
    <property type="evidence" value="ECO:0007669"/>
    <property type="project" value="UniProtKB-UniPathway"/>
</dbReference>
<dbReference type="GO" id="GO:0019632">
    <property type="term" value="P:shikimate metabolic process"/>
    <property type="evidence" value="ECO:0000314"/>
    <property type="project" value="UniProtKB"/>
</dbReference>
<dbReference type="CDD" id="cd00464">
    <property type="entry name" value="SK"/>
    <property type="match status" value="1"/>
</dbReference>
<dbReference type="FunFam" id="3.40.50.300:FF:000822">
    <property type="entry name" value="Shikimate kinase, chloroplastic"/>
    <property type="match status" value="1"/>
</dbReference>
<dbReference type="Gene3D" id="3.40.50.300">
    <property type="entry name" value="P-loop containing nucleotide triphosphate hydrolases"/>
    <property type="match status" value="1"/>
</dbReference>
<dbReference type="HAMAP" id="MF_00109">
    <property type="entry name" value="Shikimate_kinase"/>
    <property type="match status" value="1"/>
</dbReference>
<dbReference type="InterPro" id="IPR027417">
    <property type="entry name" value="P-loop_NTPase"/>
</dbReference>
<dbReference type="InterPro" id="IPR031322">
    <property type="entry name" value="Shikimate/glucono_kinase"/>
</dbReference>
<dbReference type="InterPro" id="IPR000623">
    <property type="entry name" value="Shikimate_kinase/TSH1"/>
</dbReference>
<dbReference type="InterPro" id="IPR023000">
    <property type="entry name" value="Shikimate_kinase_CS"/>
</dbReference>
<dbReference type="PANTHER" id="PTHR21087">
    <property type="entry name" value="SHIKIMATE KINASE"/>
    <property type="match status" value="1"/>
</dbReference>
<dbReference type="PANTHER" id="PTHR21087:SF26">
    <property type="entry name" value="SHIKIMATE KINASE 3, CHLOROPLASTIC"/>
    <property type="match status" value="1"/>
</dbReference>
<dbReference type="Pfam" id="PF01202">
    <property type="entry name" value="SKI"/>
    <property type="match status" value="1"/>
</dbReference>
<dbReference type="PRINTS" id="PR01100">
    <property type="entry name" value="SHIKIMTKNASE"/>
</dbReference>
<dbReference type="SUPFAM" id="SSF52540">
    <property type="entry name" value="P-loop containing nucleoside triphosphate hydrolases"/>
    <property type="match status" value="1"/>
</dbReference>
<dbReference type="PROSITE" id="PS01128">
    <property type="entry name" value="SHIKIMATE_KINASE"/>
    <property type="match status" value="1"/>
</dbReference>
<name>SK3_ORYSJ</name>
<feature type="transit peptide" description="Chloroplast" evidence="2">
    <location>
        <begin position="1"/>
        <end position="57"/>
    </location>
</feature>
<feature type="chain" id="PRO_0000421115" description="Shikimate kinase 3, chloroplastic">
    <location>
        <begin position="58"/>
        <end position="287"/>
    </location>
</feature>
<feature type="binding site" evidence="1">
    <location>
        <begin position="98"/>
        <end position="105"/>
    </location>
    <ligand>
        <name>ATP</name>
        <dbReference type="ChEBI" id="CHEBI:30616"/>
    </ligand>
</feature>
<feature type="binding site" evidence="1">
    <location>
        <position position="105"/>
    </location>
    <ligand>
        <name>Mg(2+)</name>
        <dbReference type="ChEBI" id="CHEBI:18420"/>
    </ligand>
</feature>
<feature type="binding site" evidence="1">
    <location>
        <position position="123"/>
    </location>
    <ligand>
        <name>substrate</name>
    </ligand>
</feature>
<feature type="binding site" evidence="1">
    <location>
        <position position="148"/>
    </location>
    <ligand>
        <name>substrate</name>
    </ligand>
</feature>
<feature type="binding site" evidence="1">
    <location>
        <position position="170"/>
    </location>
    <ligand>
        <name>substrate</name>
    </ligand>
</feature>
<feature type="binding site" evidence="1">
    <location>
        <position position="209"/>
    </location>
    <ligand>
        <name>ATP</name>
        <dbReference type="ChEBI" id="CHEBI:30616"/>
    </ligand>
</feature>
<proteinExistence type="evidence at protein level"/>
<gene>
    <name type="primary">SK3</name>
    <name type="ordered locus">Os04g0640600</name>
    <name type="ordered locus">LOC_Os04g54800</name>
    <name type="ORF">OsJ_16353</name>
    <name type="ORF">OSJNBb0079B02.2</name>
</gene>
<organism>
    <name type="scientific">Oryza sativa subsp. japonica</name>
    <name type="common">Rice</name>
    <dbReference type="NCBI Taxonomy" id="39947"/>
    <lineage>
        <taxon>Eukaryota</taxon>
        <taxon>Viridiplantae</taxon>
        <taxon>Streptophyta</taxon>
        <taxon>Embryophyta</taxon>
        <taxon>Tracheophyta</taxon>
        <taxon>Spermatophyta</taxon>
        <taxon>Magnoliopsida</taxon>
        <taxon>Liliopsida</taxon>
        <taxon>Poales</taxon>
        <taxon>Poaceae</taxon>
        <taxon>BOP clade</taxon>
        <taxon>Oryzoideae</taxon>
        <taxon>Oryzeae</taxon>
        <taxon>Oryzinae</taxon>
        <taxon>Oryza</taxon>
        <taxon>Oryza sativa</taxon>
    </lineage>
</organism>
<evidence type="ECO:0000250" key="1"/>
<evidence type="ECO:0000255" key="2"/>
<evidence type="ECO:0000269" key="3">
    <source>
    </source>
</evidence>
<evidence type="ECO:0000305" key="4"/>
<evidence type="ECO:0000305" key="5">
    <source>
    </source>
</evidence>
<accession>Q7X7H9</accession>
<accession>Q0J9N6</accession>
<accession>Q5JQX9</accession>
<reference key="1">
    <citation type="journal article" date="2005" name="Planta">
        <title>Identification of three shikimate kinase genes in rice: characterization of their differential expression during panicle development and of the enzymatic activities of the encoded proteins.</title>
        <authorList>
            <person name="Kasai K."/>
            <person name="Kanno T."/>
            <person name="Akita M."/>
            <person name="Ikejiri-Kanno Y."/>
            <person name="Wakasa K."/>
            <person name="Tozawa Y."/>
        </authorList>
    </citation>
    <scope>NUCLEOTIDE SEQUENCE [MRNA]</scope>
    <scope>FUNCTION</scope>
    <scope>CATALYTIC ACTIVITY</scope>
    <scope>SUBCELLULAR LOCATION</scope>
    <scope>TISSUE SPECIFICITY</scope>
    <source>
        <strain>cv. Nipponbare</strain>
    </source>
</reference>
<reference key="2">
    <citation type="journal article" date="2002" name="Nature">
        <title>Sequence and analysis of rice chromosome 4.</title>
        <authorList>
            <person name="Feng Q."/>
            <person name="Zhang Y."/>
            <person name="Hao P."/>
            <person name="Wang S."/>
            <person name="Fu G."/>
            <person name="Huang Y."/>
            <person name="Li Y."/>
            <person name="Zhu J."/>
            <person name="Liu Y."/>
            <person name="Hu X."/>
            <person name="Jia P."/>
            <person name="Zhang Y."/>
            <person name="Zhao Q."/>
            <person name="Ying K."/>
            <person name="Yu S."/>
            <person name="Tang Y."/>
            <person name="Weng Q."/>
            <person name="Zhang L."/>
            <person name="Lu Y."/>
            <person name="Mu J."/>
            <person name="Lu Y."/>
            <person name="Zhang L.S."/>
            <person name="Yu Z."/>
            <person name="Fan D."/>
            <person name="Liu X."/>
            <person name="Lu T."/>
            <person name="Li C."/>
            <person name="Wu Y."/>
            <person name="Sun T."/>
            <person name="Lei H."/>
            <person name="Li T."/>
            <person name="Hu H."/>
            <person name="Guan J."/>
            <person name="Wu M."/>
            <person name="Zhang R."/>
            <person name="Zhou B."/>
            <person name="Chen Z."/>
            <person name="Chen L."/>
            <person name="Jin Z."/>
            <person name="Wang R."/>
            <person name="Yin H."/>
            <person name="Cai Z."/>
            <person name="Ren S."/>
            <person name="Lv G."/>
            <person name="Gu W."/>
            <person name="Zhu G."/>
            <person name="Tu Y."/>
            <person name="Jia J."/>
            <person name="Zhang Y."/>
            <person name="Chen J."/>
            <person name="Kang H."/>
            <person name="Chen X."/>
            <person name="Shao C."/>
            <person name="Sun Y."/>
            <person name="Hu Q."/>
            <person name="Zhang X."/>
            <person name="Zhang W."/>
            <person name="Wang L."/>
            <person name="Ding C."/>
            <person name="Sheng H."/>
            <person name="Gu J."/>
            <person name="Chen S."/>
            <person name="Ni L."/>
            <person name="Zhu F."/>
            <person name="Chen W."/>
            <person name="Lan L."/>
            <person name="Lai Y."/>
            <person name="Cheng Z."/>
            <person name="Gu M."/>
            <person name="Jiang J."/>
            <person name="Li J."/>
            <person name="Hong G."/>
            <person name="Xue Y."/>
            <person name="Han B."/>
        </authorList>
    </citation>
    <scope>NUCLEOTIDE SEQUENCE [LARGE SCALE GENOMIC DNA]</scope>
    <source>
        <strain>cv. Nipponbare</strain>
    </source>
</reference>
<reference key="3">
    <citation type="journal article" date="2005" name="Nature">
        <title>The map-based sequence of the rice genome.</title>
        <authorList>
            <consortium name="International rice genome sequencing project (IRGSP)"/>
        </authorList>
    </citation>
    <scope>NUCLEOTIDE SEQUENCE [LARGE SCALE GENOMIC DNA]</scope>
    <source>
        <strain>cv. Nipponbare</strain>
    </source>
</reference>
<reference key="4">
    <citation type="journal article" date="2008" name="Nucleic Acids Res.">
        <title>The rice annotation project database (RAP-DB): 2008 update.</title>
        <authorList>
            <consortium name="The rice annotation project (RAP)"/>
        </authorList>
    </citation>
    <scope>GENOME REANNOTATION</scope>
    <source>
        <strain>cv. Nipponbare</strain>
    </source>
</reference>
<reference key="5">
    <citation type="journal article" date="2013" name="Rice">
        <title>Improvement of the Oryza sativa Nipponbare reference genome using next generation sequence and optical map data.</title>
        <authorList>
            <person name="Kawahara Y."/>
            <person name="de la Bastide M."/>
            <person name="Hamilton J.P."/>
            <person name="Kanamori H."/>
            <person name="McCombie W.R."/>
            <person name="Ouyang S."/>
            <person name="Schwartz D.C."/>
            <person name="Tanaka T."/>
            <person name="Wu J."/>
            <person name="Zhou S."/>
            <person name="Childs K.L."/>
            <person name="Davidson R.M."/>
            <person name="Lin H."/>
            <person name="Quesada-Ocampo L."/>
            <person name="Vaillancourt B."/>
            <person name="Sakai H."/>
            <person name="Lee S.S."/>
            <person name="Kim J."/>
            <person name="Numa H."/>
            <person name="Itoh T."/>
            <person name="Buell C.R."/>
            <person name="Matsumoto T."/>
        </authorList>
    </citation>
    <scope>GENOME REANNOTATION</scope>
    <source>
        <strain>cv. Nipponbare</strain>
    </source>
</reference>
<reference key="6">
    <citation type="journal article" date="2005" name="PLoS Biol.">
        <title>The genomes of Oryza sativa: a history of duplications.</title>
        <authorList>
            <person name="Yu J."/>
            <person name="Wang J."/>
            <person name="Lin W."/>
            <person name="Li S."/>
            <person name="Li H."/>
            <person name="Zhou J."/>
            <person name="Ni P."/>
            <person name="Dong W."/>
            <person name="Hu S."/>
            <person name="Zeng C."/>
            <person name="Zhang J."/>
            <person name="Zhang Y."/>
            <person name="Li R."/>
            <person name="Xu Z."/>
            <person name="Li S."/>
            <person name="Li X."/>
            <person name="Zheng H."/>
            <person name="Cong L."/>
            <person name="Lin L."/>
            <person name="Yin J."/>
            <person name="Geng J."/>
            <person name="Li G."/>
            <person name="Shi J."/>
            <person name="Liu J."/>
            <person name="Lv H."/>
            <person name="Li J."/>
            <person name="Wang J."/>
            <person name="Deng Y."/>
            <person name="Ran L."/>
            <person name="Shi X."/>
            <person name="Wang X."/>
            <person name="Wu Q."/>
            <person name="Li C."/>
            <person name="Ren X."/>
            <person name="Wang J."/>
            <person name="Wang X."/>
            <person name="Li D."/>
            <person name="Liu D."/>
            <person name="Zhang X."/>
            <person name="Ji Z."/>
            <person name="Zhao W."/>
            <person name="Sun Y."/>
            <person name="Zhang Z."/>
            <person name="Bao J."/>
            <person name="Han Y."/>
            <person name="Dong L."/>
            <person name="Ji J."/>
            <person name="Chen P."/>
            <person name="Wu S."/>
            <person name="Liu J."/>
            <person name="Xiao Y."/>
            <person name="Bu D."/>
            <person name="Tan J."/>
            <person name="Yang L."/>
            <person name="Ye C."/>
            <person name="Zhang J."/>
            <person name="Xu J."/>
            <person name="Zhou Y."/>
            <person name="Yu Y."/>
            <person name="Zhang B."/>
            <person name="Zhuang S."/>
            <person name="Wei H."/>
            <person name="Liu B."/>
            <person name="Lei M."/>
            <person name="Yu H."/>
            <person name="Li Y."/>
            <person name="Xu H."/>
            <person name="Wei S."/>
            <person name="He X."/>
            <person name="Fang L."/>
            <person name="Zhang Z."/>
            <person name="Zhang Y."/>
            <person name="Huang X."/>
            <person name="Su Z."/>
            <person name="Tong W."/>
            <person name="Li J."/>
            <person name="Tong Z."/>
            <person name="Li S."/>
            <person name="Ye J."/>
            <person name="Wang L."/>
            <person name="Fang L."/>
            <person name="Lei T."/>
            <person name="Chen C.-S."/>
            <person name="Chen H.-C."/>
            <person name="Xu Z."/>
            <person name="Li H."/>
            <person name="Huang H."/>
            <person name="Zhang F."/>
            <person name="Xu H."/>
            <person name="Li N."/>
            <person name="Zhao C."/>
            <person name="Li S."/>
            <person name="Dong L."/>
            <person name="Huang Y."/>
            <person name="Li L."/>
            <person name="Xi Y."/>
            <person name="Qi Q."/>
            <person name="Li W."/>
            <person name="Zhang B."/>
            <person name="Hu W."/>
            <person name="Zhang Y."/>
            <person name="Tian X."/>
            <person name="Jiao Y."/>
            <person name="Liang X."/>
            <person name="Jin J."/>
            <person name="Gao L."/>
            <person name="Zheng W."/>
            <person name="Hao B."/>
            <person name="Liu S.-M."/>
            <person name="Wang W."/>
            <person name="Yuan L."/>
            <person name="Cao M."/>
            <person name="McDermott J."/>
            <person name="Samudrala R."/>
            <person name="Wang J."/>
            <person name="Wong G.K.-S."/>
            <person name="Yang H."/>
        </authorList>
    </citation>
    <scope>NUCLEOTIDE SEQUENCE [LARGE SCALE GENOMIC DNA]</scope>
    <source>
        <strain>cv. Nipponbare</strain>
    </source>
</reference>
<sequence>MDAGVGLRAKPGAWAGLGNPRRSSTARVPVRFAVEKFAQPLVLGSDRRSCGAKLKVSCSRKPAGIDKTYYSADEALVLKQKAEDVVPYLNDRCIYLVGMMGSGKTTVGKILAEVLGYSFFDSDKLVEKAVGISSVAEIFQLHSEAFFRDNESEVLRDLSSMHRLVVATGGGAVIRPINWSYMKKGSTIWLDVPLDALARRIAAVGTASRPLLHQESGDPYAKAYAKLTALFEQRMDSYANADARVSLEHIAVKQGHSNVTTLTPSAIAIEALLKMESFLTEKAMIRN</sequence>